<name>VGP_MABVP</name>
<keyword id="KW-0002">3D-structure</keyword>
<keyword id="KW-0165">Cleavage on pair of basic residues</keyword>
<keyword id="KW-1015">Disulfide bond</keyword>
<keyword id="KW-1170">Fusion of virus membrane with host endosomal membrane</keyword>
<keyword id="KW-1168">Fusion of virus membrane with host membrane</keyword>
<keyword id="KW-0325">Glycoprotein</keyword>
<keyword id="KW-1032">Host cell membrane</keyword>
<keyword id="KW-1043">Host membrane</keyword>
<keyword id="KW-0945">Host-virus interaction</keyword>
<keyword id="KW-0449">Lipoprotein</keyword>
<keyword id="KW-0472">Membrane</keyword>
<keyword id="KW-0564">Palmitate</keyword>
<keyword id="KW-0732">Signal</keyword>
<keyword id="KW-0812">Transmembrane</keyword>
<keyword id="KW-1133">Transmembrane helix</keyword>
<keyword id="KW-1161">Viral attachment to host cell</keyword>
<keyword id="KW-0261">Viral envelope protein</keyword>
<keyword id="KW-1162">Viral penetration into host cytoplasm</keyword>
<keyword id="KW-0946">Virion</keyword>
<keyword id="KW-1160">Virus entry into host cell</keyword>
<organism>
    <name type="scientific">Lake Victoria marburgvirus (strain Popp-67)</name>
    <name type="common">MARV</name>
    <name type="synonym">Marburg virus (strain West Germany/Popp/1967)</name>
    <dbReference type="NCBI Taxonomy" id="33728"/>
    <lineage>
        <taxon>Viruses</taxon>
        <taxon>Riboviria</taxon>
        <taxon>Orthornavirae</taxon>
        <taxon>Negarnaviricota</taxon>
        <taxon>Haploviricotina</taxon>
        <taxon>Monjiviricetes</taxon>
        <taxon>Mononegavirales</taxon>
        <taxon>Filoviridae</taxon>
        <taxon>Orthomarburgvirus</taxon>
        <taxon>Orthomarburgvirus marburgense</taxon>
    </lineage>
</organism>
<proteinExistence type="evidence at protein level"/>
<dbReference type="EMBL" id="X68493">
    <property type="protein sequence ID" value="CAA48507.1"/>
    <property type="molecule type" value="Genomic_RNA"/>
</dbReference>
<dbReference type="EMBL" id="Z29337">
    <property type="protein sequence ID" value="CAA82539.1"/>
    <property type="molecule type" value="Genomic_RNA"/>
</dbReference>
<dbReference type="PIR" id="S33316">
    <property type="entry name" value="S33316"/>
</dbReference>
<dbReference type="PDB" id="4G2K">
    <property type="method" value="X-ray"/>
    <property type="resolution" value="1.90 A"/>
    <property type="chains" value="A/B/C=554-633"/>
</dbReference>
<dbReference type="PDBsum" id="4G2K"/>
<dbReference type="SMR" id="P35254"/>
<dbReference type="GlyCosmos" id="P35254">
    <property type="glycosylation" value="22 sites, No reported glycans"/>
</dbReference>
<dbReference type="EvolutionaryTrace" id="P35254"/>
<dbReference type="Proteomes" id="UP000007772">
    <property type="component" value="Genome"/>
</dbReference>
<dbReference type="GO" id="GO:0020002">
    <property type="term" value="C:host cell plasma membrane"/>
    <property type="evidence" value="ECO:0007669"/>
    <property type="project" value="UniProtKB-SubCell"/>
</dbReference>
<dbReference type="GO" id="GO:0016020">
    <property type="term" value="C:membrane"/>
    <property type="evidence" value="ECO:0007669"/>
    <property type="project" value="UniProtKB-KW"/>
</dbReference>
<dbReference type="GO" id="GO:0019031">
    <property type="term" value="C:viral envelope"/>
    <property type="evidence" value="ECO:0007669"/>
    <property type="project" value="UniProtKB-KW"/>
</dbReference>
<dbReference type="GO" id="GO:0055036">
    <property type="term" value="C:virion membrane"/>
    <property type="evidence" value="ECO:0007669"/>
    <property type="project" value="UniProtKB-SubCell"/>
</dbReference>
<dbReference type="GO" id="GO:0039654">
    <property type="term" value="P:fusion of virus membrane with host endosome membrane"/>
    <property type="evidence" value="ECO:0007669"/>
    <property type="project" value="UniProtKB-KW"/>
</dbReference>
<dbReference type="GO" id="GO:0046718">
    <property type="term" value="P:symbiont entry into host cell"/>
    <property type="evidence" value="ECO:0007669"/>
    <property type="project" value="UniProtKB-KW"/>
</dbReference>
<dbReference type="GO" id="GO:0019062">
    <property type="term" value="P:virion attachment to host cell"/>
    <property type="evidence" value="ECO:0007669"/>
    <property type="project" value="UniProtKB-KW"/>
</dbReference>
<dbReference type="CDD" id="cd09850">
    <property type="entry name" value="Ebola-like_HR1-HR2"/>
    <property type="match status" value="1"/>
</dbReference>
<dbReference type="Gene3D" id="1.10.287.210">
    <property type="match status" value="1"/>
</dbReference>
<dbReference type="InterPro" id="IPR054584">
    <property type="entry name" value="Ebola-like_HR1-HR2"/>
</dbReference>
<dbReference type="InterPro" id="IPR014625">
    <property type="entry name" value="GPC_FiloV"/>
</dbReference>
<dbReference type="InterPro" id="IPR002561">
    <property type="entry name" value="GPC_filovir-type_extra_dom"/>
</dbReference>
<dbReference type="InterPro" id="IPR018154">
    <property type="entry name" value="TLV/ENV_coat_polyprotein"/>
</dbReference>
<dbReference type="PANTHER" id="PTHR10424">
    <property type="entry name" value="VIRAL ENVELOPE PROTEIN"/>
    <property type="match status" value="1"/>
</dbReference>
<dbReference type="Pfam" id="PF22307">
    <property type="entry name" value="Ebola-like_HR1-HR2"/>
    <property type="match status" value="1"/>
</dbReference>
<dbReference type="Pfam" id="PF01611">
    <property type="entry name" value="Filo_glycop"/>
    <property type="match status" value="1"/>
</dbReference>
<dbReference type="PIRSF" id="PIRSF036874">
    <property type="entry name" value="GPC_FiloV"/>
    <property type="match status" value="1"/>
</dbReference>
<dbReference type="SUPFAM" id="SSF58069">
    <property type="entry name" value="Virus ectodomain"/>
    <property type="match status" value="1"/>
</dbReference>
<sequence length="681" mass="74485">MKTTCLFISLILIQGIKTLPILEIASNNQPQNVDSVCSGTLQKTEDVHLMGFTLSGQKVADSPLEASKRWAFRTGVPPKNVEYTEGEEAKTCYNISVTDPSGKSLLLDPPTNIRDYPKCKTIHHIQGQNPHAQGIALHLWGAFFLYDRIASTTMYRGRVFTEGNIAAMIVNKTVHKMIFSRQGQGYRHMNLTSTNKYWTSNNGTQTNDTGCFGALQEYNSTKNQTCAPSKIPSPLPTARPEIKPTSTPTDATTLNTTDPNNDDEDLITSGSGSGEQEPYTTSDAVTKQGLSSTMPPTPSPQPSTPQQEGNNTDHSQGTVTEPNKTNTTAQPSMPPHNTTAISTNNTSKNNFSTLSVSLQNTTNYDTQSTATENEQTSAPSKTTLPPTGNLTTAKSTNNTKGPTTTAPNMTNGHLTSPSPTPNPTTQHLVYFRKKRSILWREGDMFPFLDGLINAPIDFDPVPNTKTIFDESSSSGASAEEDQHASPNISLTLSYFPNINENTAYSGENENDCDAELRIWSVQEDDLAAGLSWIPFFGPGIEGLYTAGLIKNQNNLVCRLRRLANQTAKSLELLLRVTTEERTFSLINRHAIDFLLTRWGGTCKVLGPDCCIGIEDLSRNISEQIDQIKKDEQKEGTGWGLGGKWWTSDWGVLTNLGILLLLSIAVLIALSCICRIFTKYIG</sequence>
<accession>P35254</accession>
<reference key="1">
    <citation type="journal article" date="1993" name="FEBS Lett.">
        <title>The GP-protein of Marburg virus contains the region similar to the 'immunosuppressive domain' of oncogenic retrovirus P15E proteins.</title>
        <authorList>
            <person name="Bukreyev A.A."/>
            <person name="Volchkov V.E."/>
            <person name="Blinov V.M."/>
            <person name="Netesov S.V."/>
        </authorList>
    </citation>
    <scope>NUCLEOTIDE SEQUENCE [GENOMIC RNA]</scope>
</reference>
<reference key="2">
    <citation type="journal article" date="1995" name="Arch. Virol.">
        <title>The complete nucleotide sequence of the Popp (1967) strain of Marburg virus: a comparison with the Musoke (1980) strain.</title>
        <authorList>
            <person name="Bukreyev A.A."/>
            <person name="Volchkov V.E."/>
            <person name="Blinov V.M."/>
            <person name="Dryga S.A."/>
            <person name="Netesov S.V."/>
        </authorList>
    </citation>
    <scope>NUCLEOTIDE SEQUENCE [GENOMIC RNA]</scope>
</reference>
<comment type="function">
    <text evidence="1">GP1 is responsible for binding to the receptor(s) on target cells. Interacts with CD209/DC-SIGN and CLEC4M/DC-SIGNR which act as cofactors for virus entry into the host cell. Binding to CD209 and CLEC4M, which are respectively found on dendritic cells (DCs), and on endothelial cells of liver sinusoids and lymph node sinuses, facilitate infection of macrophages and endothelial cells. These interactions not only facilitate virus cell entry, but also allow capture of viral particles by DCs and subsequent transmission to susceptible cells without DCs infection (trans infection) (By similarity).</text>
</comment>
<comment type="function">
    <text evidence="1">GP2 acts as a class I viral fusion protein. Under the current model, the protein has at least 3 conformational states: pre-fusion native state, pre-hairpin intermediate state, and post-fusion hairpin state. During viral and target cell membrane fusion, the coiled coil regions (heptad repeats) assume a trimer-of-hairpins structure, positioning the fusion peptide in close proximity to the C-terminal region of the ectodomain. The formation of this structure appears to drive apposition and subsequent fusion of viral and target cell membranes. Responsible for penetration of the virus into the cell cytoplasm by mediating the fusion of the membrane of the endocytosed virus particle with the endosomal membrane. Low pH in endosomes induces an irreversible conformational change in GP2, releasing the fusion hydrophobic peptide (By similarity).</text>
</comment>
<comment type="subunit">
    <text evidence="1">Homotrimer; each monomer consists of a GP1 and a GP2 subunit linked by disulfide bonds. The resulting peplomers (GP1,2) protrude from the virus surface as spikes. GP1,2 interacts with human CD209 and CLEC4M (collectively referred to as DC-SIGN(R)). Asialoglycoprotein receptor (ASGP-R) may be a liver-specific receptor for GP1,2. Members of the Tyro3 receptor tyrosine kinase family may be cell entry factors interacting with GP1,2 (By similarity).</text>
</comment>
<comment type="subcellular location">
    <molecule>GP2</molecule>
    <subcellularLocation>
        <location evidence="3">Virion membrane</location>
        <topology evidence="4">Single-pass type I membrane protein</topology>
    </subcellularLocation>
    <subcellularLocation>
        <location evidence="3">Host cell membrane</location>
        <topology evidence="4">Single-pass type I membrane protein</topology>
    </subcellularLocation>
    <text evidence="3">In the cell, localizes to the plasma membrane lipid rafts, which probably represent the assembly and budding site.</text>
</comment>
<comment type="subcellular location">
    <molecule>GP1</molecule>
    <subcellularLocation>
        <location evidence="3">Virion membrane</location>
        <topology evidence="3">Peripheral membrane protein</topology>
    </subcellularLocation>
    <subcellularLocation>
        <location evidence="3">Host cell membrane</location>
        <topology evidence="3">Peripheral membrane protein</topology>
    </subcellularLocation>
    <text evidence="3">GP1 is not anchored to the viral envelope, but forms a disulfid-linked complex with the extravirion surface GP2. In the cell, both GP1 and GP2 localize to the plasma membrane lipid rafts, which probably represent the assembly and budding site. GP1 can also be shed after proteolytic processing.</text>
</comment>
<comment type="domain">
    <text evidence="1">The coiled coil regions play a role in oligomerization and fusion activity.</text>
</comment>
<comment type="domain">
    <text evidence="1">The transmembrane domain is essential and sufficient for recruitment envelope glycoproteins into VP40-enriched multivesicular bodies.</text>
</comment>
<comment type="PTM">
    <text evidence="1">N-glycosylated.</text>
</comment>
<comment type="PTM">
    <text evidence="1">O-glycosylated in the mucin-like region.</text>
</comment>
<comment type="PTM">
    <text evidence="1">Specific enzymatic cleavages in vivo yield mature proteins. The precursor is processed into GP1 and GP2 by host cell furin in the trans Golgi, and maybe by other host proteases, to yield the mature GP1 and GP2 proteins. The cleavage site corresponds to the furin optimal cleavage sequence [KR]-X-[KR]-R (By similarity).</text>
</comment>
<comment type="PTM">
    <text evidence="1">GP1 is phosphorylated on serine residues between residues 260 and 273.</text>
</comment>
<comment type="miscellaneous">
    <text evidence="1">Filoviruses entry requires functional lipid rafts at the host cell surface.</text>
</comment>
<comment type="miscellaneous">
    <text evidence="1">Essential for infectivity, as it is the sole viral protein expressed at the virion surface.</text>
</comment>
<comment type="similarity">
    <text evidence="6">Belongs to the filoviruses glycoprotein family.</text>
</comment>
<organismHost>
    <name type="scientific">Chlorocebus aethiops</name>
    <name type="common">Green monkey</name>
    <name type="synonym">Cercopithecus aethiops</name>
    <dbReference type="NCBI Taxonomy" id="9534"/>
</organismHost>
<organismHost>
    <name type="scientific">Homo sapiens</name>
    <name type="common">Human</name>
    <dbReference type="NCBI Taxonomy" id="9606"/>
</organismHost>
<organismHost>
    <name type="scientific">Rousettus aegyptiacus</name>
    <name type="common">Egyptian fruit bat</name>
    <name type="synonym">Pteropus aegyptiacus</name>
    <dbReference type="NCBI Taxonomy" id="9407"/>
</organismHost>
<gene>
    <name type="primary">GP</name>
</gene>
<protein>
    <recommendedName>
        <fullName>Envelope glycoprotein</fullName>
    </recommendedName>
    <alternativeName>
        <fullName>GP1,2</fullName>
        <shortName>GP</shortName>
    </alternativeName>
    <alternativeName>
        <fullName>Virion spike glycoprotein</fullName>
    </alternativeName>
    <component>
        <recommendedName>
            <fullName>GP1</fullName>
        </recommendedName>
    </component>
    <component>
        <recommendedName>
            <fullName>GP2</fullName>
        </recommendedName>
    </component>
</protein>
<feature type="signal peptide" evidence="1">
    <location>
        <begin position="1"/>
        <end position="18"/>
    </location>
</feature>
<feature type="chain" id="PRO_0000037516" description="Envelope glycoprotein">
    <location>
        <begin position="19"/>
        <end position="681"/>
    </location>
</feature>
<feature type="chain" id="PRO_0000314984" description="GP1" evidence="1">
    <location>
        <begin position="33"/>
        <end position="435"/>
    </location>
</feature>
<feature type="chain" id="PRO_0000314985" description="GP2" evidence="1">
    <location>
        <begin position="436"/>
        <end position="681"/>
    </location>
</feature>
<feature type="topological domain" description="Extracellular" evidence="4">
    <location>
        <begin position="19"/>
        <end position="648"/>
    </location>
</feature>
<feature type="transmembrane region" description="Helical" evidence="4">
    <location>
        <begin position="649"/>
        <end position="669"/>
    </location>
</feature>
<feature type="topological domain" description="Cytoplasmic" evidence="4">
    <location>
        <begin position="670"/>
        <end position="681"/>
    </location>
</feature>
<feature type="region of interest" description="Receptor-binding" evidence="1">
    <location>
        <begin position="38"/>
        <end position="188"/>
    </location>
</feature>
<feature type="region of interest" description="Disordered" evidence="5">
    <location>
        <begin position="223"/>
        <end position="351"/>
    </location>
</feature>
<feature type="region of interest" description="Mucin-like region" evidence="1">
    <location>
        <begin position="277"/>
        <end position="455"/>
    </location>
</feature>
<feature type="region of interest" description="Disordered" evidence="5">
    <location>
        <begin position="366"/>
        <end position="425"/>
    </location>
</feature>
<feature type="region of interest" description="Fusion peptide" evidence="1">
    <location>
        <begin position="529"/>
        <end position="549"/>
    </location>
</feature>
<feature type="compositionally biased region" description="Low complexity" evidence="5">
    <location>
        <begin position="244"/>
        <end position="259"/>
    </location>
</feature>
<feature type="compositionally biased region" description="Polar residues" evidence="5">
    <location>
        <begin position="278"/>
        <end position="290"/>
    </location>
</feature>
<feature type="compositionally biased region" description="Polar residues" evidence="5">
    <location>
        <begin position="308"/>
        <end position="341"/>
    </location>
</feature>
<feature type="compositionally biased region" description="Low complexity" evidence="5">
    <location>
        <begin position="342"/>
        <end position="351"/>
    </location>
</feature>
<feature type="compositionally biased region" description="Polar residues" evidence="5">
    <location>
        <begin position="366"/>
        <end position="414"/>
    </location>
</feature>
<feature type="site" description="Cleavage; by host furin" evidence="1">
    <location>
        <begin position="435"/>
        <end position="436"/>
    </location>
</feature>
<feature type="lipid moiety-binding region" description="S-palmitoyl cysteine; by host" evidence="2">
    <location>
        <position position="671"/>
    </location>
</feature>
<feature type="lipid moiety-binding region" description="S-palmitoyl cysteine; by host" evidence="2">
    <location>
        <position position="673"/>
    </location>
</feature>
<feature type="glycosylation site" description="N-linked (GlcNAc...) asparagine; by host" evidence="4">
    <location>
        <position position="94"/>
    </location>
</feature>
<feature type="glycosylation site" description="N-linked (GlcNAc...) asparagine; by host" evidence="4">
    <location>
        <position position="171"/>
    </location>
</feature>
<feature type="glycosylation site" description="N-linked (GlcNAc...) asparagine; by host" evidence="4">
    <location>
        <position position="190"/>
    </location>
</feature>
<feature type="glycosylation site" description="N-linked (GlcNAc...) asparagine; by host" evidence="4">
    <location>
        <position position="202"/>
    </location>
</feature>
<feature type="glycosylation site" description="N-linked (GlcNAc...) asparagine; by host" evidence="4">
    <location>
        <position position="207"/>
    </location>
</feature>
<feature type="glycosylation site" description="N-linked (GlcNAc...) asparagine; by host" evidence="4">
    <location>
        <position position="219"/>
    </location>
</feature>
<feature type="glycosylation site" description="N-linked (GlcNAc...) asparagine; by host" evidence="4">
    <location>
        <position position="223"/>
    </location>
</feature>
<feature type="glycosylation site" description="N-linked (GlcNAc...) asparagine; by host" evidence="4">
    <location>
        <position position="255"/>
    </location>
</feature>
<feature type="glycosylation site" description="N-linked (GlcNAc...) asparagine; by host" evidence="4">
    <location>
        <position position="310"/>
    </location>
</feature>
<feature type="glycosylation site" description="N-linked (GlcNAc...) asparagine; by host" evidence="4">
    <location>
        <position position="323"/>
    </location>
</feature>
<feature type="glycosylation site" description="N-linked (GlcNAc...) asparagine; by host" evidence="4">
    <location>
        <position position="326"/>
    </location>
</feature>
<feature type="glycosylation site" description="N-linked (GlcNAc...) asparagine; by host" evidence="4">
    <location>
        <position position="337"/>
    </location>
</feature>
<feature type="glycosylation site" description="N-linked (GlcNAc...) asparagine; by host" evidence="4">
    <location>
        <position position="344"/>
    </location>
</feature>
<feature type="glycosylation site" description="N-linked (GlcNAc...) asparagine; by host" evidence="4">
    <location>
        <position position="345"/>
    </location>
</feature>
<feature type="glycosylation site" description="N-linked (GlcNAc...) asparagine; by host" evidence="4">
    <location>
        <position position="350"/>
    </location>
</feature>
<feature type="glycosylation site" description="N-linked (GlcNAc...) asparagine; by host" evidence="4">
    <location>
        <position position="360"/>
    </location>
</feature>
<feature type="glycosylation site" description="N-linked (GlcNAc...) asparagine; by host" evidence="4">
    <location>
        <position position="389"/>
    </location>
</feature>
<feature type="glycosylation site" description="N-linked (GlcNAc...) asparagine; by host" evidence="4">
    <location>
        <position position="397"/>
    </location>
</feature>
<feature type="glycosylation site" description="N-linked (GlcNAc...) asparagine; by host" evidence="4">
    <location>
        <position position="408"/>
    </location>
</feature>
<feature type="glycosylation site" description="N-linked (GlcNAc...) asparagine; by host" evidence="4">
    <location>
        <position position="487"/>
    </location>
</feature>
<feature type="glycosylation site" description="N-linked (GlcNAc...) asparagine; by host" evidence="4">
    <location>
        <position position="564"/>
    </location>
</feature>
<feature type="glycosylation site" description="N-linked (GlcNAc...) asparagine; by host" evidence="4">
    <location>
        <position position="619"/>
    </location>
</feature>
<feature type="helix" evidence="7">
    <location>
        <begin position="554"/>
        <end position="595"/>
    </location>
</feature>
<feature type="helix" evidence="7">
    <location>
        <begin position="596"/>
        <end position="598"/>
    </location>
</feature>
<feature type="helix" evidence="7">
    <location>
        <begin position="601"/>
        <end position="605"/>
    </location>
</feature>
<feature type="helix" evidence="7">
    <location>
        <begin position="607"/>
        <end position="610"/>
    </location>
</feature>
<feature type="helix" evidence="7">
    <location>
        <begin position="617"/>
        <end position="630"/>
    </location>
</feature>
<evidence type="ECO:0000250" key="1"/>
<evidence type="ECO:0000250" key="2">
    <source>
        <dbReference type="UniProtKB" id="P35253"/>
    </source>
</evidence>
<evidence type="ECO:0000250" key="3">
    <source>
        <dbReference type="UniProtKB" id="Q05320"/>
    </source>
</evidence>
<evidence type="ECO:0000255" key="4"/>
<evidence type="ECO:0000256" key="5">
    <source>
        <dbReference type="SAM" id="MobiDB-lite"/>
    </source>
</evidence>
<evidence type="ECO:0000305" key="6"/>
<evidence type="ECO:0007829" key="7">
    <source>
        <dbReference type="PDB" id="4G2K"/>
    </source>
</evidence>